<keyword id="KW-0007">Acetylation</keyword>
<keyword id="KW-0067">ATP-binding</keyword>
<keyword id="KW-0347">Helicase</keyword>
<keyword id="KW-0378">Hydrolase</keyword>
<keyword id="KW-0507">mRNA processing</keyword>
<keyword id="KW-0508">mRNA splicing</keyword>
<keyword id="KW-0547">Nucleotide-binding</keyword>
<keyword id="KW-1185">Reference proteome</keyword>
<keyword id="KW-0747">Spliceosome</keyword>
<gene>
    <name evidence="5" type="ordered locus">At1g27900</name>
    <name evidence="7" type="ORF">F13K9.28</name>
    <name evidence="6" type="ORF">F28L5.6</name>
</gene>
<proteinExistence type="evidence at protein level"/>
<reference key="1">
    <citation type="journal article" date="2000" name="Nature">
        <title>Sequence and analysis of chromosome 1 of the plant Arabidopsis thaliana.</title>
        <authorList>
            <person name="Theologis A."/>
            <person name="Ecker J.R."/>
            <person name="Palm C.J."/>
            <person name="Federspiel N.A."/>
            <person name="Kaul S."/>
            <person name="White O."/>
            <person name="Alonso J."/>
            <person name="Altafi H."/>
            <person name="Araujo R."/>
            <person name="Bowman C.L."/>
            <person name="Brooks S.Y."/>
            <person name="Buehler E."/>
            <person name="Chan A."/>
            <person name="Chao Q."/>
            <person name="Chen H."/>
            <person name="Cheuk R.F."/>
            <person name="Chin C.W."/>
            <person name="Chung M.K."/>
            <person name="Conn L."/>
            <person name="Conway A.B."/>
            <person name="Conway A.R."/>
            <person name="Creasy T.H."/>
            <person name="Dewar K."/>
            <person name="Dunn P."/>
            <person name="Etgu P."/>
            <person name="Feldblyum T.V."/>
            <person name="Feng J.-D."/>
            <person name="Fong B."/>
            <person name="Fujii C.Y."/>
            <person name="Gill J.E."/>
            <person name="Goldsmith A.D."/>
            <person name="Haas B."/>
            <person name="Hansen N.F."/>
            <person name="Hughes B."/>
            <person name="Huizar L."/>
            <person name="Hunter J.L."/>
            <person name="Jenkins J."/>
            <person name="Johnson-Hopson C."/>
            <person name="Khan S."/>
            <person name="Khaykin E."/>
            <person name="Kim C.J."/>
            <person name="Koo H.L."/>
            <person name="Kremenetskaia I."/>
            <person name="Kurtz D.B."/>
            <person name="Kwan A."/>
            <person name="Lam B."/>
            <person name="Langin-Hooper S."/>
            <person name="Lee A."/>
            <person name="Lee J.M."/>
            <person name="Lenz C.A."/>
            <person name="Li J.H."/>
            <person name="Li Y.-P."/>
            <person name="Lin X."/>
            <person name="Liu S.X."/>
            <person name="Liu Z.A."/>
            <person name="Luros J.S."/>
            <person name="Maiti R."/>
            <person name="Marziali A."/>
            <person name="Militscher J."/>
            <person name="Miranda M."/>
            <person name="Nguyen M."/>
            <person name="Nierman W.C."/>
            <person name="Osborne B.I."/>
            <person name="Pai G."/>
            <person name="Peterson J."/>
            <person name="Pham P.K."/>
            <person name="Rizzo M."/>
            <person name="Rooney T."/>
            <person name="Rowley D."/>
            <person name="Sakano H."/>
            <person name="Salzberg S.L."/>
            <person name="Schwartz J.R."/>
            <person name="Shinn P."/>
            <person name="Southwick A.M."/>
            <person name="Sun H."/>
            <person name="Tallon L.J."/>
            <person name="Tambunga G."/>
            <person name="Toriumi M.J."/>
            <person name="Town C.D."/>
            <person name="Utterback T."/>
            <person name="Van Aken S."/>
            <person name="Vaysberg M."/>
            <person name="Vysotskaia V.S."/>
            <person name="Walker M."/>
            <person name="Wu D."/>
            <person name="Yu G."/>
            <person name="Fraser C.M."/>
            <person name="Venter J.C."/>
            <person name="Davis R.W."/>
        </authorList>
    </citation>
    <scope>NUCLEOTIDE SEQUENCE [LARGE SCALE GENOMIC DNA]</scope>
    <source>
        <strain>cv. Columbia</strain>
    </source>
</reference>
<reference key="2">
    <citation type="journal article" date="2017" name="Plant J.">
        <title>Araport11: a complete reannotation of the Arabidopsis thaliana reference genome.</title>
        <authorList>
            <person name="Cheng C.Y."/>
            <person name="Krishnakumar V."/>
            <person name="Chan A.P."/>
            <person name="Thibaud-Nissen F."/>
            <person name="Schobel S."/>
            <person name="Town C.D."/>
        </authorList>
    </citation>
    <scope>GENOME REANNOTATION</scope>
    <source>
        <strain>cv. Columbia</strain>
    </source>
</reference>
<reference key="3">
    <citation type="journal article" date="2012" name="Mol. Cell. Proteomics">
        <title>Comparative large-scale characterisation of plant vs. mammal proteins reveals similar and idiosyncratic N-alpha acetylation features.</title>
        <authorList>
            <person name="Bienvenut W.V."/>
            <person name="Sumpton D."/>
            <person name="Martinez A."/>
            <person name="Lilla S."/>
            <person name="Espagne C."/>
            <person name="Meinnel T."/>
            <person name="Giglione C."/>
        </authorList>
    </citation>
    <scope>ACETYLATION [LARGE SCALE ANALYSIS] AT ALA-2</scope>
    <scope>CLEAVAGE OF INITIATOR METHIONINE [LARGE SCALE ANALYSIS]</scope>
    <scope>IDENTIFICATION BY MASS SPECTROMETRY [LARGE SCALE ANALYSIS]</scope>
</reference>
<reference key="4">
    <citation type="journal article" date="2013" name="PLoS ONE">
        <title>Genome-wide comparative in silico analysis of the RNA helicase gene family in Zea mays and Glycine max: a comparison with Arabidopsis and Oryza sativa.</title>
        <authorList>
            <person name="Xu R."/>
            <person name="Zhang S."/>
            <person name="Huang J."/>
            <person name="Zheng C."/>
        </authorList>
    </citation>
    <scope>GENE FAMILY</scope>
</reference>
<name>DEAH4_ARATH</name>
<accession>Q93Y16</accession>
<accession>Q9C6M8</accession>
<accession>Q9C7G2</accession>
<dbReference type="EC" id="3.6.4.13"/>
<dbReference type="EMBL" id="AC069471">
    <property type="protein sequence ID" value="AAG51496.1"/>
    <property type="status" value="ALT_SEQ"/>
    <property type="molecule type" value="Genomic_DNA"/>
</dbReference>
<dbReference type="EMBL" id="AC079280">
    <property type="protein sequence ID" value="AAG50585.1"/>
    <property type="status" value="ALT_SEQ"/>
    <property type="molecule type" value="Genomic_DNA"/>
</dbReference>
<dbReference type="EMBL" id="CP002684">
    <property type="protein sequence ID" value="AEE30889.1"/>
    <property type="molecule type" value="Genomic_DNA"/>
</dbReference>
<dbReference type="EMBL" id="AY054692">
    <property type="protein sequence ID" value="AAK96883.1"/>
    <property type="molecule type" value="mRNA"/>
</dbReference>
<dbReference type="EMBL" id="AY128718">
    <property type="protein sequence ID" value="AAM91118.1"/>
    <property type="molecule type" value="mRNA"/>
</dbReference>
<dbReference type="PIR" id="C86404">
    <property type="entry name" value="C86404"/>
</dbReference>
<dbReference type="RefSeq" id="NP_564296.1">
    <property type="nucleotide sequence ID" value="NM_102555.3"/>
</dbReference>
<dbReference type="SMR" id="Q93Y16"/>
<dbReference type="FunCoup" id="Q93Y16">
    <property type="interactions" value="585"/>
</dbReference>
<dbReference type="STRING" id="3702.Q93Y16"/>
<dbReference type="iPTMnet" id="Q93Y16"/>
<dbReference type="PaxDb" id="3702-AT1G27900.1"/>
<dbReference type="ProteomicsDB" id="224564"/>
<dbReference type="EnsemblPlants" id="AT1G27900.1">
    <property type="protein sequence ID" value="AT1G27900.1"/>
    <property type="gene ID" value="AT1G27900"/>
</dbReference>
<dbReference type="GeneID" id="839683"/>
<dbReference type="Gramene" id="AT1G27900.1">
    <property type="protein sequence ID" value="AT1G27900.1"/>
    <property type="gene ID" value="AT1G27900"/>
</dbReference>
<dbReference type="KEGG" id="ath:AT1G27900"/>
<dbReference type="Araport" id="AT1G27900"/>
<dbReference type="TAIR" id="AT1G27900"/>
<dbReference type="eggNOG" id="KOG0922">
    <property type="taxonomic scope" value="Eukaryota"/>
</dbReference>
<dbReference type="HOGENOM" id="CLU_001832_5_11_1"/>
<dbReference type="InParanoid" id="Q93Y16"/>
<dbReference type="OMA" id="QIMQKMA"/>
<dbReference type="OrthoDB" id="10253254at2759"/>
<dbReference type="PhylomeDB" id="Q93Y16"/>
<dbReference type="PRO" id="PR:Q93Y16"/>
<dbReference type="Proteomes" id="UP000006548">
    <property type="component" value="Chromosome 1"/>
</dbReference>
<dbReference type="ExpressionAtlas" id="Q93Y16">
    <property type="expression patterns" value="baseline and differential"/>
</dbReference>
<dbReference type="GO" id="GO:0005681">
    <property type="term" value="C:spliceosomal complex"/>
    <property type="evidence" value="ECO:0007669"/>
    <property type="project" value="UniProtKB-KW"/>
</dbReference>
<dbReference type="GO" id="GO:0005524">
    <property type="term" value="F:ATP binding"/>
    <property type="evidence" value="ECO:0007669"/>
    <property type="project" value="UniProtKB-KW"/>
</dbReference>
<dbReference type="GO" id="GO:0016887">
    <property type="term" value="F:ATP hydrolysis activity"/>
    <property type="evidence" value="ECO:0007669"/>
    <property type="project" value="InterPro"/>
</dbReference>
<dbReference type="GO" id="GO:0003724">
    <property type="term" value="F:RNA helicase activity"/>
    <property type="evidence" value="ECO:0007669"/>
    <property type="project" value="UniProtKB-EC"/>
</dbReference>
<dbReference type="GO" id="GO:0006397">
    <property type="term" value="P:mRNA processing"/>
    <property type="evidence" value="ECO:0007669"/>
    <property type="project" value="UniProtKB-KW"/>
</dbReference>
<dbReference type="GO" id="GO:0008380">
    <property type="term" value="P:RNA splicing"/>
    <property type="evidence" value="ECO:0007669"/>
    <property type="project" value="UniProtKB-KW"/>
</dbReference>
<dbReference type="CDD" id="cd18791">
    <property type="entry name" value="SF2_C_RHA"/>
    <property type="match status" value="1"/>
</dbReference>
<dbReference type="FunFam" id="1.10.10.2130:FF:000001">
    <property type="entry name" value="Pre-mRNA-splicing factor ATP-dependent RNA helicase"/>
    <property type="match status" value="1"/>
</dbReference>
<dbReference type="FunFam" id="3.40.50.300:FF:000145">
    <property type="entry name" value="probable ATP-dependent RNA helicase DHX40"/>
    <property type="match status" value="1"/>
</dbReference>
<dbReference type="FunFam" id="3.40.50.300:FF:001388">
    <property type="entry name" value="Probable pre-mRNA-splicing factor ATP-dependent RNA helicase DEAH4"/>
    <property type="match status" value="1"/>
</dbReference>
<dbReference type="Gene3D" id="1.20.120.1080">
    <property type="match status" value="1"/>
</dbReference>
<dbReference type="Gene3D" id="3.40.50.300">
    <property type="entry name" value="P-loop containing nucleotide triphosphate hydrolases"/>
    <property type="match status" value="2"/>
</dbReference>
<dbReference type="InterPro" id="IPR003593">
    <property type="entry name" value="AAA+_ATPase"/>
</dbReference>
<dbReference type="InterPro" id="IPR049945">
    <property type="entry name" value="AAA_22"/>
</dbReference>
<dbReference type="InterPro" id="IPR011709">
    <property type="entry name" value="DEAD-box_helicase_OB_fold"/>
</dbReference>
<dbReference type="InterPro" id="IPR002464">
    <property type="entry name" value="DNA/RNA_helicase_DEAH_CS"/>
</dbReference>
<dbReference type="InterPro" id="IPR048333">
    <property type="entry name" value="HA2_WH"/>
</dbReference>
<dbReference type="InterPro" id="IPR007502">
    <property type="entry name" value="Helicase-assoc_dom"/>
</dbReference>
<dbReference type="InterPro" id="IPR014001">
    <property type="entry name" value="Helicase_ATP-bd"/>
</dbReference>
<dbReference type="InterPro" id="IPR001650">
    <property type="entry name" value="Helicase_C-like"/>
</dbReference>
<dbReference type="InterPro" id="IPR027417">
    <property type="entry name" value="P-loop_NTPase"/>
</dbReference>
<dbReference type="PANTHER" id="PTHR18934">
    <property type="entry name" value="ATP-DEPENDENT RNA HELICASE"/>
    <property type="match status" value="1"/>
</dbReference>
<dbReference type="PANTHER" id="PTHR18934:SF234">
    <property type="entry name" value="PRE-MRNA-SPLICING FACTOR ATP-DEPENDENT RNA HELICASE DEAH4-RELATED"/>
    <property type="match status" value="1"/>
</dbReference>
<dbReference type="Pfam" id="PF13401">
    <property type="entry name" value="AAA_22"/>
    <property type="match status" value="1"/>
</dbReference>
<dbReference type="Pfam" id="PF21010">
    <property type="entry name" value="HA2_C"/>
    <property type="match status" value="1"/>
</dbReference>
<dbReference type="Pfam" id="PF04408">
    <property type="entry name" value="HA2_N"/>
    <property type="match status" value="1"/>
</dbReference>
<dbReference type="Pfam" id="PF00271">
    <property type="entry name" value="Helicase_C"/>
    <property type="match status" value="1"/>
</dbReference>
<dbReference type="Pfam" id="PF07717">
    <property type="entry name" value="OB_NTP_bind"/>
    <property type="match status" value="1"/>
</dbReference>
<dbReference type="SMART" id="SM00382">
    <property type="entry name" value="AAA"/>
    <property type="match status" value="1"/>
</dbReference>
<dbReference type="SMART" id="SM00487">
    <property type="entry name" value="DEXDc"/>
    <property type="match status" value="1"/>
</dbReference>
<dbReference type="SMART" id="SM00847">
    <property type="entry name" value="HA2"/>
    <property type="match status" value="1"/>
</dbReference>
<dbReference type="SMART" id="SM00490">
    <property type="entry name" value="HELICc"/>
    <property type="match status" value="1"/>
</dbReference>
<dbReference type="SUPFAM" id="SSF52540">
    <property type="entry name" value="P-loop containing nucleoside triphosphate hydrolases"/>
    <property type="match status" value="1"/>
</dbReference>
<dbReference type="PROSITE" id="PS00690">
    <property type="entry name" value="DEAH_ATP_HELICASE"/>
    <property type="match status" value="1"/>
</dbReference>
<dbReference type="PROSITE" id="PS51192">
    <property type="entry name" value="HELICASE_ATP_BIND_1"/>
    <property type="match status" value="1"/>
</dbReference>
<dbReference type="PROSITE" id="PS51194">
    <property type="entry name" value="HELICASE_CTER"/>
    <property type="match status" value="1"/>
</dbReference>
<sequence>MANLPILQFEEKIVETVEKNSVVVIIGETGSGKSTQLSQILHRHGYTKSGVIAITQPRRVAAVSVARRVAQELDVPLGEDVGYAIRFEDRTTSKTRIKYLTDGVLLRESLSNPMLDDYSVIILDEAHERSLNTDILLGLVKRLVRIRASNFKVLITSATLDGEKVSEFFSGCPVLNVPGKLYPVEILYSKERPVSYIESSLKVAIDIHVREPEGDILIFMTGQDDIEKLVSRLEEKVRSLAEGSCMDAIIYPLHGSLPPEMQVRVFSPPPPNCRRFIVSTNIAETSLTVDGVVYVIDSGYVKQRQYNPSSGMFSLDVIQISKVQANQRAGRAGRTRPGKCYRLYPLAVYRDDFLDATIPEIQRTSLAGSVLYLKSLDLPDIDILKFDFLDAPSSESLEDALKQLYFIDAIDENGAITRIGRTMSDLPLEPSLSRTLIEANETGCLSQALTVVAMLSAETTLLPARSKPSEKKRKHDEDSNLPNGSGYGDHIQLLQIFESWDRTNYDPVWCKENGMQVRGMVFVKDVRRQLCQIMQKISKDRLEVGADGRKSSSRDDYRKLRKALCVGNANQIAERMLRHNGYRTLSFQSQLVQVHPSSVLSADNDGMMPNYVVYHELISTTRPFMRNVCAVDMAWVAPIKRKIEKLNVRKLSGGPAPSFKVPEEKTELSKNNAETPAVSENVESRIEAARERFLARKGQK</sequence>
<evidence type="ECO:0000255" key="1">
    <source>
        <dbReference type="PROSITE-ProRule" id="PRU00541"/>
    </source>
</evidence>
<evidence type="ECO:0000255" key="2">
    <source>
        <dbReference type="PROSITE-ProRule" id="PRU00542"/>
    </source>
</evidence>
<evidence type="ECO:0000256" key="3">
    <source>
        <dbReference type="SAM" id="MobiDB-lite"/>
    </source>
</evidence>
<evidence type="ECO:0000305" key="4"/>
<evidence type="ECO:0000312" key="5">
    <source>
        <dbReference type="Araport" id="AT1G27900"/>
    </source>
</evidence>
<evidence type="ECO:0000312" key="6">
    <source>
        <dbReference type="EMBL" id="AAG50585.1"/>
    </source>
</evidence>
<evidence type="ECO:0000312" key="7">
    <source>
        <dbReference type="EMBL" id="AAG51496.1"/>
    </source>
</evidence>
<evidence type="ECO:0007744" key="8">
    <source>
    </source>
</evidence>
<organism>
    <name type="scientific">Arabidopsis thaliana</name>
    <name type="common">Mouse-ear cress</name>
    <dbReference type="NCBI Taxonomy" id="3702"/>
    <lineage>
        <taxon>Eukaryota</taxon>
        <taxon>Viridiplantae</taxon>
        <taxon>Streptophyta</taxon>
        <taxon>Embryophyta</taxon>
        <taxon>Tracheophyta</taxon>
        <taxon>Spermatophyta</taxon>
        <taxon>Magnoliopsida</taxon>
        <taxon>eudicotyledons</taxon>
        <taxon>Gunneridae</taxon>
        <taxon>Pentapetalae</taxon>
        <taxon>rosids</taxon>
        <taxon>malvids</taxon>
        <taxon>Brassicales</taxon>
        <taxon>Brassicaceae</taxon>
        <taxon>Camelineae</taxon>
        <taxon>Arabidopsis</taxon>
    </lineage>
</organism>
<protein>
    <recommendedName>
        <fullName evidence="4">Probable pre-mRNA-splicing factor ATP-dependent RNA helicase DEAH4</fullName>
        <ecNumber>3.6.4.13</ecNumber>
    </recommendedName>
    <alternativeName>
        <fullName evidence="4">DEAH RNA helicase homolog PRP22</fullName>
    </alternativeName>
</protein>
<comment type="function">
    <text evidence="4">May be involved in pre-mRNA splicing.</text>
</comment>
<comment type="catalytic activity">
    <reaction>
        <text>ATP + H2O = ADP + phosphate + H(+)</text>
        <dbReference type="Rhea" id="RHEA:13065"/>
        <dbReference type="ChEBI" id="CHEBI:15377"/>
        <dbReference type="ChEBI" id="CHEBI:15378"/>
        <dbReference type="ChEBI" id="CHEBI:30616"/>
        <dbReference type="ChEBI" id="CHEBI:43474"/>
        <dbReference type="ChEBI" id="CHEBI:456216"/>
        <dbReference type="EC" id="3.6.4.13"/>
    </reaction>
</comment>
<comment type="similarity">
    <text evidence="4">Belongs to the DEAD box helicase family. DEAH subfamily. PRP22 sub-subfamily.</text>
</comment>
<comment type="sequence caution" evidence="4">
    <conflict type="erroneous gene model prediction">
        <sequence resource="EMBL-CDS" id="AAG50585"/>
    </conflict>
</comment>
<comment type="sequence caution" evidence="4">
    <conflict type="erroneous gene model prediction">
        <sequence resource="EMBL-CDS" id="AAG51496"/>
    </conflict>
</comment>
<feature type="initiator methionine" description="Removed" evidence="8">
    <location>
        <position position="1"/>
    </location>
</feature>
<feature type="chain" id="PRO_0000434934" description="Probable pre-mRNA-splicing factor ATP-dependent RNA helicase DEAH4">
    <location>
        <begin position="2"/>
        <end position="700"/>
    </location>
</feature>
<feature type="domain" description="Helicase ATP-binding" evidence="1">
    <location>
        <begin position="14"/>
        <end position="178"/>
    </location>
</feature>
<feature type="domain" description="Helicase C-terminal" evidence="2">
    <location>
        <begin position="200"/>
        <end position="377"/>
    </location>
</feature>
<feature type="region of interest" description="Disordered" evidence="3">
    <location>
        <begin position="463"/>
        <end position="486"/>
    </location>
</feature>
<feature type="region of interest" description="Disordered" evidence="3">
    <location>
        <begin position="654"/>
        <end position="682"/>
    </location>
</feature>
<feature type="short sequence motif" description="DEAH box" evidence="1">
    <location>
        <begin position="124"/>
        <end position="127"/>
    </location>
</feature>
<feature type="binding site" evidence="1">
    <location>
        <begin position="27"/>
        <end position="34"/>
    </location>
    <ligand>
        <name>ATP</name>
        <dbReference type="ChEBI" id="CHEBI:30616"/>
    </ligand>
</feature>
<feature type="modified residue" description="N-acetylalanine" evidence="8">
    <location>
        <position position="2"/>
    </location>
</feature>